<proteinExistence type="inferred from homology"/>
<reference key="1">
    <citation type="journal article" date="2009" name="Infect. Immun.">
        <title>Comparative genomics reveal extensive transposon-mediated genomic plasticity and diversity among potential effector proteins within the genus Coxiella.</title>
        <authorList>
            <person name="Beare P.A."/>
            <person name="Unsworth N."/>
            <person name="Andoh M."/>
            <person name="Voth D.E."/>
            <person name="Omsland A."/>
            <person name="Gilk S.D."/>
            <person name="Williams K.P."/>
            <person name="Sobral B.W."/>
            <person name="Kupko J.J. III"/>
            <person name="Porcella S.F."/>
            <person name="Samuel J.E."/>
            <person name="Heinzen R.A."/>
        </authorList>
    </citation>
    <scope>NUCLEOTIDE SEQUENCE [LARGE SCALE GENOMIC DNA]</scope>
    <source>
        <strain>Dugway 5J108-111</strain>
    </source>
</reference>
<protein>
    <recommendedName>
        <fullName evidence="1">Histidine--tRNA ligase</fullName>
        <ecNumber evidence="1">6.1.1.21</ecNumber>
    </recommendedName>
    <alternativeName>
        <fullName evidence="1">Histidyl-tRNA synthetase</fullName>
        <shortName evidence="1">HisRS</shortName>
    </alternativeName>
</protein>
<feature type="chain" id="PRO_1000076266" description="Histidine--tRNA ligase">
    <location>
        <begin position="1"/>
        <end position="421"/>
    </location>
</feature>
<organism>
    <name type="scientific">Coxiella burnetii (strain Dugway 5J108-111)</name>
    <dbReference type="NCBI Taxonomy" id="434922"/>
    <lineage>
        <taxon>Bacteria</taxon>
        <taxon>Pseudomonadati</taxon>
        <taxon>Pseudomonadota</taxon>
        <taxon>Gammaproteobacteria</taxon>
        <taxon>Legionellales</taxon>
        <taxon>Coxiellaceae</taxon>
        <taxon>Coxiella</taxon>
    </lineage>
</organism>
<keyword id="KW-0030">Aminoacyl-tRNA synthetase</keyword>
<keyword id="KW-0067">ATP-binding</keyword>
<keyword id="KW-0963">Cytoplasm</keyword>
<keyword id="KW-0436">Ligase</keyword>
<keyword id="KW-0547">Nucleotide-binding</keyword>
<keyword id="KW-0648">Protein biosynthesis</keyword>
<dbReference type="EC" id="6.1.1.21" evidence="1"/>
<dbReference type="EMBL" id="CP000733">
    <property type="protein sequence ID" value="ABS77239.1"/>
    <property type="molecule type" value="Genomic_DNA"/>
</dbReference>
<dbReference type="RefSeq" id="WP_010958101.1">
    <property type="nucleotide sequence ID" value="NC_009727.1"/>
</dbReference>
<dbReference type="SMR" id="A9KFU6"/>
<dbReference type="KEGG" id="cbd:CBUD_1332"/>
<dbReference type="HOGENOM" id="CLU_025113_1_1_6"/>
<dbReference type="Proteomes" id="UP000008555">
    <property type="component" value="Chromosome"/>
</dbReference>
<dbReference type="GO" id="GO:0005737">
    <property type="term" value="C:cytoplasm"/>
    <property type="evidence" value="ECO:0007669"/>
    <property type="project" value="UniProtKB-SubCell"/>
</dbReference>
<dbReference type="GO" id="GO:0005524">
    <property type="term" value="F:ATP binding"/>
    <property type="evidence" value="ECO:0007669"/>
    <property type="project" value="UniProtKB-UniRule"/>
</dbReference>
<dbReference type="GO" id="GO:0004821">
    <property type="term" value="F:histidine-tRNA ligase activity"/>
    <property type="evidence" value="ECO:0007669"/>
    <property type="project" value="UniProtKB-UniRule"/>
</dbReference>
<dbReference type="GO" id="GO:0006427">
    <property type="term" value="P:histidyl-tRNA aminoacylation"/>
    <property type="evidence" value="ECO:0007669"/>
    <property type="project" value="UniProtKB-UniRule"/>
</dbReference>
<dbReference type="CDD" id="cd00773">
    <property type="entry name" value="HisRS-like_core"/>
    <property type="match status" value="1"/>
</dbReference>
<dbReference type="CDD" id="cd00859">
    <property type="entry name" value="HisRS_anticodon"/>
    <property type="match status" value="1"/>
</dbReference>
<dbReference type="FunFam" id="3.30.930.10:FF:000005">
    <property type="entry name" value="Histidine--tRNA ligase"/>
    <property type="match status" value="1"/>
</dbReference>
<dbReference type="Gene3D" id="3.40.50.800">
    <property type="entry name" value="Anticodon-binding domain"/>
    <property type="match status" value="1"/>
</dbReference>
<dbReference type="Gene3D" id="3.30.930.10">
    <property type="entry name" value="Bira Bifunctional Protein, Domain 2"/>
    <property type="match status" value="1"/>
</dbReference>
<dbReference type="HAMAP" id="MF_00127">
    <property type="entry name" value="His_tRNA_synth"/>
    <property type="match status" value="1"/>
</dbReference>
<dbReference type="InterPro" id="IPR006195">
    <property type="entry name" value="aa-tRNA-synth_II"/>
</dbReference>
<dbReference type="InterPro" id="IPR045864">
    <property type="entry name" value="aa-tRNA-synth_II/BPL/LPL"/>
</dbReference>
<dbReference type="InterPro" id="IPR004154">
    <property type="entry name" value="Anticodon-bd"/>
</dbReference>
<dbReference type="InterPro" id="IPR036621">
    <property type="entry name" value="Anticodon-bd_dom_sf"/>
</dbReference>
<dbReference type="InterPro" id="IPR015807">
    <property type="entry name" value="His-tRNA-ligase"/>
</dbReference>
<dbReference type="InterPro" id="IPR041715">
    <property type="entry name" value="HisRS-like_core"/>
</dbReference>
<dbReference type="InterPro" id="IPR004516">
    <property type="entry name" value="HisRS/HisZ"/>
</dbReference>
<dbReference type="InterPro" id="IPR033656">
    <property type="entry name" value="HisRS_anticodon"/>
</dbReference>
<dbReference type="NCBIfam" id="TIGR00442">
    <property type="entry name" value="hisS"/>
    <property type="match status" value="1"/>
</dbReference>
<dbReference type="PANTHER" id="PTHR43707:SF1">
    <property type="entry name" value="HISTIDINE--TRNA LIGASE, MITOCHONDRIAL-RELATED"/>
    <property type="match status" value="1"/>
</dbReference>
<dbReference type="PANTHER" id="PTHR43707">
    <property type="entry name" value="HISTIDYL-TRNA SYNTHETASE"/>
    <property type="match status" value="1"/>
</dbReference>
<dbReference type="Pfam" id="PF03129">
    <property type="entry name" value="HGTP_anticodon"/>
    <property type="match status" value="1"/>
</dbReference>
<dbReference type="Pfam" id="PF13393">
    <property type="entry name" value="tRNA-synt_His"/>
    <property type="match status" value="1"/>
</dbReference>
<dbReference type="PIRSF" id="PIRSF001549">
    <property type="entry name" value="His-tRNA_synth"/>
    <property type="match status" value="1"/>
</dbReference>
<dbReference type="SUPFAM" id="SSF52954">
    <property type="entry name" value="Class II aaRS ABD-related"/>
    <property type="match status" value="1"/>
</dbReference>
<dbReference type="SUPFAM" id="SSF55681">
    <property type="entry name" value="Class II aaRS and biotin synthetases"/>
    <property type="match status" value="1"/>
</dbReference>
<dbReference type="PROSITE" id="PS50862">
    <property type="entry name" value="AA_TRNA_LIGASE_II"/>
    <property type="match status" value="1"/>
</dbReference>
<evidence type="ECO:0000255" key="1">
    <source>
        <dbReference type="HAMAP-Rule" id="MF_00127"/>
    </source>
</evidence>
<gene>
    <name evidence="1" type="primary">hisS</name>
    <name type="ordered locus">CBUD_1332</name>
</gene>
<name>SYH_COXBN</name>
<accession>A9KFU6</accession>
<sequence length="421" mass="47810">MTKSIQAIRGMSDTLPEEIPYWSFLENACRSVVSAYHYREIRFPVVEQTALFKRTIGEATDIVEKEMYTFTDRNGDSLTLRPEGTAGCVRAGIQNGLFYNQIQRLWYLGPMFRHERPQKGRYRQFYQLGVETYGMAGAPIEAELIFMCLRLWKALGLESCIHLELNTLGTLDSRNAYRQALVTYLQSREKELDEDSRRRLHTNPLRILDSKNPDLQPLLAEAPKLIDYLDETSRRHFDQLRSLLDQAEVPFIVNPTLVRGLDYYTHTVFEWVTDQLGAQGTVCAGGRYDNLVELLGGKSTPAAGFAAGLERLVLLLRGVQECLDKIDIYVVIAGEAVIQEGLLMTEQLRNVLPEWVIEADLSGSSLKSQFKRADKSGAKWALVIGEEEIKTNTVTLKHLRETVPQKSLTRDTLIPYLKSEG</sequence>
<comment type="catalytic activity">
    <reaction evidence="1">
        <text>tRNA(His) + L-histidine + ATP = L-histidyl-tRNA(His) + AMP + diphosphate + H(+)</text>
        <dbReference type="Rhea" id="RHEA:17313"/>
        <dbReference type="Rhea" id="RHEA-COMP:9665"/>
        <dbReference type="Rhea" id="RHEA-COMP:9689"/>
        <dbReference type="ChEBI" id="CHEBI:15378"/>
        <dbReference type="ChEBI" id="CHEBI:30616"/>
        <dbReference type="ChEBI" id="CHEBI:33019"/>
        <dbReference type="ChEBI" id="CHEBI:57595"/>
        <dbReference type="ChEBI" id="CHEBI:78442"/>
        <dbReference type="ChEBI" id="CHEBI:78527"/>
        <dbReference type="ChEBI" id="CHEBI:456215"/>
        <dbReference type="EC" id="6.1.1.21"/>
    </reaction>
</comment>
<comment type="subunit">
    <text evidence="1">Homodimer.</text>
</comment>
<comment type="subcellular location">
    <subcellularLocation>
        <location evidence="1">Cytoplasm</location>
    </subcellularLocation>
</comment>
<comment type="similarity">
    <text evidence="1">Belongs to the class-II aminoacyl-tRNA synthetase family.</text>
</comment>